<dbReference type="EC" id="6.1.1.2" evidence="1"/>
<dbReference type="EMBL" id="AL445066">
    <property type="protein sequence ID" value="CAC12336.1"/>
    <property type="molecule type" value="Genomic_DNA"/>
</dbReference>
<dbReference type="RefSeq" id="WP_010901618.1">
    <property type="nucleotide sequence ID" value="NC_002578.1"/>
</dbReference>
<dbReference type="SMR" id="Q9HIW5"/>
<dbReference type="FunCoup" id="Q9HIW5">
    <property type="interactions" value="239"/>
</dbReference>
<dbReference type="STRING" id="273075.gene:9572435"/>
<dbReference type="PaxDb" id="273075-Ta1211"/>
<dbReference type="EnsemblBacteria" id="CAC12336">
    <property type="protein sequence ID" value="CAC12336"/>
    <property type="gene ID" value="CAC12336"/>
</dbReference>
<dbReference type="KEGG" id="tac:Ta1211"/>
<dbReference type="eggNOG" id="arCOG01887">
    <property type="taxonomic scope" value="Archaea"/>
</dbReference>
<dbReference type="HOGENOM" id="CLU_032621_3_0_2"/>
<dbReference type="InParanoid" id="Q9HIW5"/>
<dbReference type="OrthoDB" id="371821at2157"/>
<dbReference type="Proteomes" id="UP000001024">
    <property type="component" value="Chromosome"/>
</dbReference>
<dbReference type="GO" id="GO:0005737">
    <property type="term" value="C:cytoplasm"/>
    <property type="evidence" value="ECO:0007669"/>
    <property type="project" value="UniProtKB-SubCell"/>
</dbReference>
<dbReference type="GO" id="GO:0005524">
    <property type="term" value="F:ATP binding"/>
    <property type="evidence" value="ECO:0007669"/>
    <property type="project" value="UniProtKB-UniRule"/>
</dbReference>
<dbReference type="GO" id="GO:0004830">
    <property type="term" value="F:tryptophan-tRNA ligase activity"/>
    <property type="evidence" value="ECO:0007669"/>
    <property type="project" value="UniProtKB-UniRule"/>
</dbReference>
<dbReference type="GO" id="GO:0006436">
    <property type="term" value="P:tryptophanyl-tRNA aminoacylation"/>
    <property type="evidence" value="ECO:0007669"/>
    <property type="project" value="UniProtKB-UniRule"/>
</dbReference>
<dbReference type="CDD" id="cd00806">
    <property type="entry name" value="TrpRS_core"/>
    <property type="match status" value="1"/>
</dbReference>
<dbReference type="Gene3D" id="3.40.50.620">
    <property type="entry name" value="HUPs"/>
    <property type="match status" value="1"/>
</dbReference>
<dbReference type="Gene3D" id="1.10.240.10">
    <property type="entry name" value="Tyrosyl-Transfer RNA Synthetase"/>
    <property type="match status" value="1"/>
</dbReference>
<dbReference type="HAMAP" id="MF_00140_A">
    <property type="entry name" value="Trp_tRNA_synth_A"/>
    <property type="match status" value="1"/>
</dbReference>
<dbReference type="InterPro" id="IPR002305">
    <property type="entry name" value="aa-tRNA-synth_Ic"/>
</dbReference>
<dbReference type="InterPro" id="IPR014729">
    <property type="entry name" value="Rossmann-like_a/b/a_fold"/>
</dbReference>
<dbReference type="InterPro" id="IPR002306">
    <property type="entry name" value="Trp-tRNA-ligase"/>
</dbReference>
<dbReference type="InterPro" id="IPR020653">
    <property type="entry name" value="Tryptophan-tRNA-ligase_arc"/>
</dbReference>
<dbReference type="NCBIfam" id="NF008926">
    <property type="entry name" value="PRK12285.1-3"/>
    <property type="match status" value="1"/>
</dbReference>
<dbReference type="PANTHER" id="PTHR10055:SF5">
    <property type="entry name" value="TRYPTOPHAN--TRNA LIGASE"/>
    <property type="match status" value="1"/>
</dbReference>
<dbReference type="PANTHER" id="PTHR10055">
    <property type="entry name" value="TRYPTOPHANYL-TRNA SYNTHETASE"/>
    <property type="match status" value="1"/>
</dbReference>
<dbReference type="Pfam" id="PF00579">
    <property type="entry name" value="tRNA-synt_1b"/>
    <property type="match status" value="2"/>
</dbReference>
<dbReference type="PRINTS" id="PR01039">
    <property type="entry name" value="TRNASYNTHTRP"/>
</dbReference>
<dbReference type="SUPFAM" id="SSF52374">
    <property type="entry name" value="Nucleotidylyl transferase"/>
    <property type="match status" value="1"/>
</dbReference>
<proteinExistence type="inferred from homology"/>
<sequence length="426" mass="49200">MINPWSSSDFFDYERLKREFGIGDMNVPFDHFLFRRHLILGQRSIDYIDYALKHHMKFNVMTGLMPSGEMHLGNKSAIDQVIFFQKLGGRVSIAVADLESYSTRGISLERAREVAIEKYILNYIAMGLEPCEIYFQSRNSDVQFLAYMLGNRTNMSELRSLYGFTDTHDLLHINAPLIQAADVLHTQMKKYGGPAPTVVPVGFDQDPHLRLMRDLAKRMRIFNIQLENDLVVSVRGKDDPKEYIDMAYEYLSSRYTNVKKDYEYRVVRADGVDQQDLVGIDLDLAHMETKYNDFAFIAPSATYQKLMKGLKGGKMSSSVPDSLISLNDDPKEARRKIMAGMTGGRDTEEEQRRLGGEPDRCPIFDLYNYEIDDDKHVKEVYDDCRNGKRMCGFCKREIADRMASWLSDLSKKREEAREKLSLYIHE</sequence>
<evidence type="ECO:0000255" key="1">
    <source>
        <dbReference type="HAMAP-Rule" id="MF_00140"/>
    </source>
</evidence>
<organism>
    <name type="scientific">Thermoplasma acidophilum (strain ATCC 25905 / DSM 1728 / JCM 9062 / NBRC 15155 / AMRC-C165)</name>
    <dbReference type="NCBI Taxonomy" id="273075"/>
    <lineage>
        <taxon>Archaea</taxon>
        <taxon>Methanobacteriati</taxon>
        <taxon>Thermoplasmatota</taxon>
        <taxon>Thermoplasmata</taxon>
        <taxon>Thermoplasmatales</taxon>
        <taxon>Thermoplasmataceae</taxon>
        <taxon>Thermoplasma</taxon>
    </lineage>
</organism>
<protein>
    <recommendedName>
        <fullName evidence="1">Tryptophan--tRNA ligase</fullName>
        <ecNumber evidence="1">6.1.1.2</ecNumber>
    </recommendedName>
    <alternativeName>
        <fullName evidence="1">Tryptophanyl-tRNA synthetase</fullName>
        <shortName evidence="1">TrpRS</shortName>
    </alternativeName>
</protein>
<gene>
    <name evidence="1" type="primary">trpS</name>
    <name type="ordered locus">Ta1211</name>
</gene>
<feature type="chain" id="PRO_0000136735" description="Tryptophan--tRNA ligase">
    <location>
        <begin position="1"/>
        <end position="426"/>
    </location>
</feature>
<feature type="short sequence motif" description="'HIGH' region">
    <location>
        <begin position="66"/>
        <end position="74"/>
    </location>
</feature>
<feature type="short sequence motif" description="'KMSKS' region">
    <location>
        <begin position="314"/>
        <end position="318"/>
    </location>
</feature>
<accession>Q9HIW5</accession>
<reference key="1">
    <citation type="journal article" date="2000" name="Nature">
        <title>The genome sequence of the thermoacidophilic scavenger Thermoplasma acidophilum.</title>
        <authorList>
            <person name="Ruepp A."/>
            <person name="Graml W."/>
            <person name="Santos-Martinez M.-L."/>
            <person name="Koretke K.K."/>
            <person name="Volker C."/>
            <person name="Mewes H.-W."/>
            <person name="Frishman D."/>
            <person name="Stocker S."/>
            <person name="Lupas A.N."/>
            <person name="Baumeister W."/>
        </authorList>
    </citation>
    <scope>NUCLEOTIDE SEQUENCE [LARGE SCALE GENOMIC DNA]</scope>
    <source>
        <strain>ATCC 25905 / DSM 1728 / JCM 9062 / NBRC 15155 / AMRC-C165</strain>
    </source>
</reference>
<keyword id="KW-0030">Aminoacyl-tRNA synthetase</keyword>
<keyword id="KW-0067">ATP-binding</keyword>
<keyword id="KW-0963">Cytoplasm</keyword>
<keyword id="KW-0436">Ligase</keyword>
<keyword id="KW-0547">Nucleotide-binding</keyword>
<keyword id="KW-0648">Protein biosynthesis</keyword>
<keyword id="KW-1185">Reference proteome</keyword>
<comment type="catalytic activity">
    <reaction evidence="1">
        <text>tRNA(Trp) + L-tryptophan + ATP = L-tryptophyl-tRNA(Trp) + AMP + diphosphate + H(+)</text>
        <dbReference type="Rhea" id="RHEA:24080"/>
        <dbReference type="Rhea" id="RHEA-COMP:9671"/>
        <dbReference type="Rhea" id="RHEA-COMP:9705"/>
        <dbReference type="ChEBI" id="CHEBI:15378"/>
        <dbReference type="ChEBI" id="CHEBI:30616"/>
        <dbReference type="ChEBI" id="CHEBI:33019"/>
        <dbReference type="ChEBI" id="CHEBI:57912"/>
        <dbReference type="ChEBI" id="CHEBI:78442"/>
        <dbReference type="ChEBI" id="CHEBI:78535"/>
        <dbReference type="ChEBI" id="CHEBI:456215"/>
        <dbReference type="EC" id="6.1.1.2"/>
    </reaction>
</comment>
<comment type="subcellular location">
    <subcellularLocation>
        <location evidence="1">Cytoplasm</location>
    </subcellularLocation>
</comment>
<comment type="similarity">
    <text evidence="1">Belongs to the class-I aminoacyl-tRNA synthetase family.</text>
</comment>
<name>SYW_THEAC</name>